<comment type="function">
    <text evidence="2">Binds with high affinity to muscular (alpha-1/CHRNA1) and neuronal (alpha-7/CHRNA7) nicotinic acetylcholine receptor (nAChR) and inhibits acetylcholine from binding to the receptor, thereby impairing neuromuscular and neuronal transmission.</text>
</comment>
<comment type="subcellular location">
    <subcellularLocation>
        <location evidence="3">Secreted</location>
    </subcellularLocation>
</comment>
<comment type="tissue specificity">
    <text evidence="4">Expressed by the venom gland.</text>
</comment>
<comment type="toxic dose">
    <text evidence="3">LD(50) is 0.096 mg/kg by intramuscular injection into mice.</text>
</comment>
<comment type="similarity">
    <text evidence="4">Belongs to the three-finger toxin family. Long-chain subfamily. Type II alpha-neurotoxin sub-subfamily.</text>
</comment>
<protein>
    <recommendedName>
        <fullName>Alpha-elapitoxin-Ast2a</fullName>
        <shortName>Alpha-EPTX-Ast2a</shortName>
    </recommendedName>
    <alternativeName>
        <fullName>Long neurotoxin 1</fullName>
    </alternativeName>
    <alternativeName>
        <fullName>Toxin B</fullName>
    </alternativeName>
</protein>
<feature type="chain" id="PRO_0000093530" description="Alpha-elapitoxin-Ast2a">
    <location>
        <begin position="1"/>
        <end position="70"/>
    </location>
</feature>
<feature type="modified residue" description="Serine amide" evidence="3">
    <location>
        <position position="70"/>
    </location>
</feature>
<feature type="disulfide bond" evidence="1">
    <location>
        <begin position="3"/>
        <end position="20"/>
    </location>
</feature>
<feature type="disulfide bond" evidence="1">
    <location>
        <begin position="13"/>
        <end position="41"/>
    </location>
</feature>
<feature type="disulfide bond" evidence="1">
    <location>
        <begin position="26"/>
        <end position="30"/>
    </location>
</feature>
<feature type="disulfide bond" evidence="1">
    <location>
        <begin position="45"/>
        <end position="56"/>
    </location>
</feature>
<feature type="disulfide bond" evidence="1">
    <location>
        <begin position="57"/>
        <end position="62"/>
    </location>
</feature>
<organism>
    <name type="scientific">Hydrophis stokesii</name>
    <name type="common">Stokes's sea snake</name>
    <name type="synonym">Astrotia stokesii</name>
    <dbReference type="NCBI Taxonomy" id="355677"/>
    <lineage>
        <taxon>Eukaryota</taxon>
        <taxon>Metazoa</taxon>
        <taxon>Chordata</taxon>
        <taxon>Craniata</taxon>
        <taxon>Vertebrata</taxon>
        <taxon>Euteleostomi</taxon>
        <taxon>Lepidosauria</taxon>
        <taxon>Squamata</taxon>
        <taxon>Bifurcata</taxon>
        <taxon>Unidentata</taxon>
        <taxon>Episquamata</taxon>
        <taxon>Toxicofera</taxon>
        <taxon>Serpentes</taxon>
        <taxon>Colubroidea</taxon>
        <taxon>Elapidae</taxon>
        <taxon>Hydrophiinae</taxon>
        <taxon>Hydrophis</taxon>
    </lineage>
</organism>
<sequence length="70" mass="7574">LSCYLGYKHSQTCPPGENVCFVKTWCDGFCNTRGERIIMGCAATCPTAKSGVHIACCSTDNCNIYAKWGS</sequence>
<evidence type="ECO:0000250" key="1"/>
<evidence type="ECO:0000250" key="2">
    <source>
        <dbReference type="UniProtKB" id="P60615"/>
    </source>
</evidence>
<evidence type="ECO:0000269" key="3">
    <source>
    </source>
</evidence>
<evidence type="ECO:0000305" key="4"/>
<reference key="1">
    <citation type="journal article" date="1978" name="Biochem. J.">
        <title>Three neurotoxins from the venom of a sea snake Astrotia stokesii, including two long-chain neurotoxic proteins with amidated C-termini.</title>
        <authorList>
            <person name="Maeda N."/>
            <person name="Tamiya N."/>
        </authorList>
    </citation>
    <scope>PROTEIN SEQUENCE</scope>
    <scope>AMIDATION AT SER-70</scope>
    <scope>TOXIC DOSE</scope>
    <scope>SUBCELLULAR LOCATION</scope>
    <source>
        <tissue>Venom</tissue>
    </source>
</reference>
<name>3L21_HYDST</name>
<proteinExistence type="evidence at protein level"/>
<accession>P01380</accession>
<dbReference type="PIR" id="A01651">
    <property type="entry name" value="N2AT1"/>
</dbReference>
<dbReference type="SMR" id="P01380"/>
<dbReference type="GO" id="GO:0005576">
    <property type="term" value="C:extracellular region"/>
    <property type="evidence" value="ECO:0007669"/>
    <property type="project" value="UniProtKB-SubCell"/>
</dbReference>
<dbReference type="GO" id="GO:0030550">
    <property type="term" value="F:acetylcholine receptor inhibitor activity"/>
    <property type="evidence" value="ECO:0007669"/>
    <property type="project" value="UniProtKB-KW"/>
</dbReference>
<dbReference type="GO" id="GO:0099106">
    <property type="term" value="F:ion channel regulator activity"/>
    <property type="evidence" value="ECO:0007669"/>
    <property type="project" value="UniProtKB-KW"/>
</dbReference>
<dbReference type="GO" id="GO:0090729">
    <property type="term" value="F:toxin activity"/>
    <property type="evidence" value="ECO:0007669"/>
    <property type="project" value="UniProtKB-KW"/>
</dbReference>
<dbReference type="CDD" id="cd00206">
    <property type="entry name" value="TFP_snake_toxin"/>
    <property type="match status" value="1"/>
</dbReference>
<dbReference type="Gene3D" id="2.10.60.10">
    <property type="entry name" value="CD59"/>
    <property type="match status" value="1"/>
</dbReference>
<dbReference type="InterPro" id="IPR003571">
    <property type="entry name" value="Snake_3FTx"/>
</dbReference>
<dbReference type="InterPro" id="IPR045860">
    <property type="entry name" value="Snake_toxin-like_sf"/>
</dbReference>
<dbReference type="InterPro" id="IPR018354">
    <property type="entry name" value="Snake_toxin_con_site"/>
</dbReference>
<dbReference type="InterPro" id="IPR054131">
    <property type="entry name" value="Toxin_cobra-type"/>
</dbReference>
<dbReference type="Pfam" id="PF21947">
    <property type="entry name" value="Toxin_cobra-type"/>
    <property type="match status" value="1"/>
</dbReference>
<dbReference type="SUPFAM" id="SSF57302">
    <property type="entry name" value="Snake toxin-like"/>
    <property type="match status" value="1"/>
</dbReference>
<dbReference type="PROSITE" id="PS00272">
    <property type="entry name" value="SNAKE_TOXIN"/>
    <property type="match status" value="1"/>
</dbReference>
<keyword id="KW-0008">Acetylcholine receptor inhibiting toxin</keyword>
<keyword id="KW-0027">Amidation</keyword>
<keyword id="KW-0903">Direct protein sequencing</keyword>
<keyword id="KW-1015">Disulfide bond</keyword>
<keyword id="KW-0872">Ion channel impairing toxin</keyword>
<keyword id="KW-0528">Neurotoxin</keyword>
<keyword id="KW-0629">Postsynaptic neurotoxin</keyword>
<keyword id="KW-0964">Secreted</keyword>
<keyword id="KW-0800">Toxin</keyword>